<proteinExistence type="inferred from homology"/>
<protein>
    <recommendedName>
        <fullName evidence="1">Large ribosomal subunit protein bL28</fullName>
    </recommendedName>
    <alternativeName>
        <fullName evidence="3">50S ribosomal protein L28</fullName>
    </alternativeName>
</protein>
<accession>Q8NS15</accession>
<dbReference type="EMBL" id="BA000036">
    <property type="protein sequence ID" value="BAB98262.1"/>
    <property type="molecule type" value="Genomic_DNA"/>
</dbReference>
<dbReference type="EMBL" id="BX927150">
    <property type="protein sequence ID" value="CAF19574.1"/>
    <property type="molecule type" value="Genomic_DNA"/>
</dbReference>
<dbReference type="RefSeq" id="NP_600097.1">
    <property type="nucleotide sequence ID" value="NC_003450.3"/>
</dbReference>
<dbReference type="RefSeq" id="WP_003858441.1">
    <property type="nucleotide sequence ID" value="NC_006958.1"/>
</dbReference>
<dbReference type="SMR" id="Q8NS15"/>
<dbReference type="STRING" id="196627.cg0991"/>
<dbReference type="GeneID" id="1018863"/>
<dbReference type="KEGG" id="cgb:cg0991"/>
<dbReference type="KEGG" id="cgl:Cgl0869"/>
<dbReference type="PATRIC" id="fig|196627.13.peg.853"/>
<dbReference type="eggNOG" id="COG0227">
    <property type="taxonomic scope" value="Bacteria"/>
</dbReference>
<dbReference type="HOGENOM" id="CLU_064548_3_1_11"/>
<dbReference type="OrthoDB" id="9805609at2"/>
<dbReference type="BioCyc" id="CORYNE:G18NG-10439-MONOMER"/>
<dbReference type="Proteomes" id="UP000000582">
    <property type="component" value="Chromosome"/>
</dbReference>
<dbReference type="Proteomes" id="UP000001009">
    <property type="component" value="Chromosome"/>
</dbReference>
<dbReference type="GO" id="GO:1990904">
    <property type="term" value="C:ribonucleoprotein complex"/>
    <property type="evidence" value="ECO:0007669"/>
    <property type="project" value="UniProtKB-KW"/>
</dbReference>
<dbReference type="GO" id="GO:0005840">
    <property type="term" value="C:ribosome"/>
    <property type="evidence" value="ECO:0007669"/>
    <property type="project" value="UniProtKB-KW"/>
</dbReference>
<dbReference type="GO" id="GO:0003735">
    <property type="term" value="F:structural constituent of ribosome"/>
    <property type="evidence" value="ECO:0007669"/>
    <property type="project" value="InterPro"/>
</dbReference>
<dbReference type="GO" id="GO:0006412">
    <property type="term" value="P:translation"/>
    <property type="evidence" value="ECO:0007669"/>
    <property type="project" value="UniProtKB-UniRule"/>
</dbReference>
<dbReference type="FunFam" id="2.30.170.40:FF:000001">
    <property type="entry name" value="50S ribosomal protein L28"/>
    <property type="match status" value="1"/>
</dbReference>
<dbReference type="Gene3D" id="2.30.170.40">
    <property type="entry name" value="Ribosomal protein L28/L24"/>
    <property type="match status" value="1"/>
</dbReference>
<dbReference type="HAMAP" id="MF_00373">
    <property type="entry name" value="Ribosomal_bL28"/>
    <property type="match status" value="1"/>
</dbReference>
<dbReference type="InterPro" id="IPR026569">
    <property type="entry name" value="Ribosomal_bL28"/>
</dbReference>
<dbReference type="InterPro" id="IPR034704">
    <property type="entry name" value="Ribosomal_bL28/bL31-like_sf"/>
</dbReference>
<dbReference type="InterPro" id="IPR001383">
    <property type="entry name" value="Ribosomal_bL28_bact-type"/>
</dbReference>
<dbReference type="InterPro" id="IPR037147">
    <property type="entry name" value="Ribosomal_bL28_sf"/>
</dbReference>
<dbReference type="NCBIfam" id="TIGR00009">
    <property type="entry name" value="L28"/>
    <property type="match status" value="1"/>
</dbReference>
<dbReference type="PANTHER" id="PTHR13528">
    <property type="entry name" value="39S RIBOSOMAL PROTEIN L28, MITOCHONDRIAL"/>
    <property type="match status" value="1"/>
</dbReference>
<dbReference type="PANTHER" id="PTHR13528:SF2">
    <property type="entry name" value="LARGE RIBOSOMAL SUBUNIT PROTEIN BL28M"/>
    <property type="match status" value="1"/>
</dbReference>
<dbReference type="Pfam" id="PF00830">
    <property type="entry name" value="Ribosomal_L28"/>
    <property type="match status" value="1"/>
</dbReference>
<dbReference type="SUPFAM" id="SSF143800">
    <property type="entry name" value="L28p-like"/>
    <property type="match status" value="1"/>
</dbReference>
<feature type="chain" id="PRO_0000178463" description="Large ribosomal subunit protein bL28">
    <location>
        <begin position="1"/>
        <end position="78"/>
    </location>
</feature>
<feature type="region of interest" description="Disordered" evidence="2">
    <location>
        <begin position="1"/>
        <end position="29"/>
    </location>
</feature>
<organism>
    <name type="scientific">Corynebacterium glutamicum (strain ATCC 13032 / DSM 20300 / JCM 1318 / BCRC 11384 / CCUG 27702 / LMG 3730 / NBRC 12168 / NCIMB 10025 / NRRL B-2784 / 534)</name>
    <dbReference type="NCBI Taxonomy" id="196627"/>
    <lineage>
        <taxon>Bacteria</taxon>
        <taxon>Bacillati</taxon>
        <taxon>Actinomycetota</taxon>
        <taxon>Actinomycetes</taxon>
        <taxon>Mycobacteriales</taxon>
        <taxon>Corynebacteriaceae</taxon>
        <taxon>Corynebacterium</taxon>
    </lineage>
</organism>
<reference key="1">
    <citation type="journal article" date="2003" name="Appl. Microbiol. Biotechnol.">
        <title>The Corynebacterium glutamicum genome: features and impacts on biotechnological processes.</title>
        <authorList>
            <person name="Ikeda M."/>
            <person name="Nakagawa S."/>
        </authorList>
    </citation>
    <scope>NUCLEOTIDE SEQUENCE [LARGE SCALE GENOMIC DNA]</scope>
    <source>
        <strain>ATCC 13032 / DSM 20300 / JCM 1318 / BCRC 11384 / CCUG 27702 / LMG 3730 / NBRC 12168 / NCIMB 10025 / NRRL B-2784 / 534</strain>
    </source>
</reference>
<reference key="2">
    <citation type="journal article" date="2003" name="J. Biotechnol.">
        <title>The complete Corynebacterium glutamicum ATCC 13032 genome sequence and its impact on the production of L-aspartate-derived amino acids and vitamins.</title>
        <authorList>
            <person name="Kalinowski J."/>
            <person name="Bathe B."/>
            <person name="Bartels D."/>
            <person name="Bischoff N."/>
            <person name="Bott M."/>
            <person name="Burkovski A."/>
            <person name="Dusch N."/>
            <person name="Eggeling L."/>
            <person name="Eikmanns B.J."/>
            <person name="Gaigalat L."/>
            <person name="Goesmann A."/>
            <person name="Hartmann M."/>
            <person name="Huthmacher K."/>
            <person name="Kraemer R."/>
            <person name="Linke B."/>
            <person name="McHardy A.C."/>
            <person name="Meyer F."/>
            <person name="Moeckel B."/>
            <person name="Pfefferle W."/>
            <person name="Puehler A."/>
            <person name="Rey D.A."/>
            <person name="Rueckert C."/>
            <person name="Rupp O."/>
            <person name="Sahm H."/>
            <person name="Wendisch V.F."/>
            <person name="Wiegraebe I."/>
            <person name="Tauch A."/>
        </authorList>
    </citation>
    <scope>NUCLEOTIDE SEQUENCE [LARGE SCALE GENOMIC DNA]</scope>
    <source>
        <strain>ATCC 13032 / DSM 20300 / JCM 1318 / BCRC 11384 / CCUG 27702 / LMG 3730 / NBRC 12168 / NCIMB 10025 / NRRL B-2784 / 534</strain>
    </source>
</reference>
<name>RL28_CORGL</name>
<evidence type="ECO:0000255" key="1">
    <source>
        <dbReference type="HAMAP-Rule" id="MF_00373"/>
    </source>
</evidence>
<evidence type="ECO:0000256" key="2">
    <source>
        <dbReference type="SAM" id="MobiDB-lite"/>
    </source>
</evidence>
<evidence type="ECO:0000305" key="3"/>
<sequence>MSAHCQVTGRKPSFGKSVSHSHRRTSRRWNPNVQRRKFYVPSEGRTITLTVSTKGLKVIDRDGIEAVVAQIRARGEKI</sequence>
<gene>
    <name evidence="1" type="primary">rpmB</name>
    <name type="ordered locus">Cgl0869</name>
    <name type="ordered locus">cg0991</name>
</gene>
<comment type="similarity">
    <text evidence="1">Belongs to the bacterial ribosomal protein bL28 family.</text>
</comment>
<keyword id="KW-1185">Reference proteome</keyword>
<keyword id="KW-0687">Ribonucleoprotein</keyword>
<keyword id="KW-0689">Ribosomal protein</keyword>